<organism>
    <name type="scientific">Escherichia coli O6:K15:H31 (strain 536 / UPEC)</name>
    <dbReference type="NCBI Taxonomy" id="362663"/>
    <lineage>
        <taxon>Bacteria</taxon>
        <taxon>Pseudomonadati</taxon>
        <taxon>Pseudomonadota</taxon>
        <taxon>Gammaproteobacteria</taxon>
        <taxon>Enterobacterales</taxon>
        <taxon>Enterobacteriaceae</taxon>
        <taxon>Escherichia</taxon>
    </lineage>
</organism>
<proteinExistence type="inferred from homology"/>
<evidence type="ECO:0000255" key="1">
    <source>
        <dbReference type="HAMAP-Rule" id="MF_00079"/>
    </source>
</evidence>
<dbReference type="EC" id="2.4.2.17" evidence="1"/>
<dbReference type="EMBL" id="CP000247">
    <property type="protein sequence ID" value="ABG70061.1"/>
    <property type="molecule type" value="Genomic_DNA"/>
</dbReference>
<dbReference type="RefSeq" id="WP_000131782.1">
    <property type="nucleotide sequence ID" value="NC_008253.1"/>
</dbReference>
<dbReference type="SMR" id="Q0TG68"/>
<dbReference type="GeneID" id="93775154"/>
<dbReference type="KEGG" id="ecp:ECP_2062"/>
<dbReference type="HOGENOM" id="CLU_038115_1_0_6"/>
<dbReference type="UniPathway" id="UPA00031">
    <property type="reaction ID" value="UER00006"/>
</dbReference>
<dbReference type="Proteomes" id="UP000009182">
    <property type="component" value="Chromosome"/>
</dbReference>
<dbReference type="GO" id="GO:0005737">
    <property type="term" value="C:cytoplasm"/>
    <property type="evidence" value="ECO:0007669"/>
    <property type="project" value="UniProtKB-SubCell"/>
</dbReference>
<dbReference type="GO" id="GO:0005524">
    <property type="term" value="F:ATP binding"/>
    <property type="evidence" value="ECO:0007669"/>
    <property type="project" value="UniProtKB-KW"/>
</dbReference>
<dbReference type="GO" id="GO:0003879">
    <property type="term" value="F:ATP phosphoribosyltransferase activity"/>
    <property type="evidence" value="ECO:0007669"/>
    <property type="project" value="UniProtKB-UniRule"/>
</dbReference>
<dbReference type="GO" id="GO:0000287">
    <property type="term" value="F:magnesium ion binding"/>
    <property type="evidence" value="ECO:0007669"/>
    <property type="project" value="UniProtKB-UniRule"/>
</dbReference>
<dbReference type="GO" id="GO:0000105">
    <property type="term" value="P:L-histidine biosynthetic process"/>
    <property type="evidence" value="ECO:0007669"/>
    <property type="project" value="UniProtKB-UniRule"/>
</dbReference>
<dbReference type="CDD" id="cd13592">
    <property type="entry name" value="PBP2_HisGL2"/>
    <property type="match status" value="1"/>
</dbReference>
<dbReference type="FunFam" id="3.30.70.120:FF:000002">
    <property type="entry name" value="ATP phosphoribosyltransferase"/>
    <property type="match status" value="1"/>
</dbReference>
<dbReference type="FunFam" id="3.40.190.10:FF:000008">
    <property type="entry name" value="ATP phosphoribosyltransferase"/>
    <property type="match status" value="1"/>
</dbReference>
<dbReference type="Gene3D" id="3.30.70.120">
    <property type="match status" value="1"/>
</dbReference>
<dbReference type="Gene3D" id="3.40.190.10">
    <property type="entry name" value="Periplasmic binding protein-like II"/>
    <property type="match status" value="2"/>
</dbReference>
<dbReference type="HAMAP" id="MF_00079">
    <property type="entry name" value="HisG_Long"/>
    <property type="match status" value="1"/>
</dbReference>
<dbReference type="InterPro" id="IPR020621">
    <property type="entry name" value="ATP-PRT_HisG_long"/>
</dbReference>
<dbReference type="InterPro" id="IPR013820">
    <property type="entry name" value="ATP_PRibTrfase_cat"/>
</dbReference>
<dbReference type="InterPro" id="IPR018198">
    <property type="entry name" value="ATP_PRibTrfase_CS"/>
</dbReference>
<dbReference type="InterPro" id="IPR001348">
    <property type="entry name" value="ATP_PRibTrfase_HisG"/>
</dbReference>
<dbReference type="InterPro" id="IPR013115">
    <property type="entry name" value="HisG_C"/>
</dbReference>
<dbReference type="InterPro" id="IPR011322">
    <property type="entry name" value="N-reg_PII-like_a/b"/>
</dbReference>
<dbReference type="InterPro" id="IPR015867">
    <property type="entry name" value="N-reg_PII/ATP_PRibTrfase_C"/>
</dbReference>
<dbReference type="NCBIfam" id="TIGR00070">
    <property type="entry name" value="hisG"/>
    <property type="match status" value="1"/>
</dbReference>
<dbReference type="NCBIfam" id="TIGR03455">
    <property type="entry name" value="HisG_C-term"/>
    <property type="match status" value="1"/>
</dbReference>
<dbReference type="PANTHER" id="PTHR21403:SF8">
    <property type="entry name" value="ATP PHOSPHORIBOSYLTRANSFERASE"/>
    <property type="match status" value="1"/>
</dbReference>
<dbReference type="PANTHER" id="PTHR21403">
    <property type="entry name" value="ATP PHOSPHORIBOSYLTRANSFERASE ATP-PRTASE"/>
    <property type="match status" value="1"/>
</dbReference>
<dbReference type="Pfam" id="PF01634">
    <property type="entry name" value="HisG"/>
    <property type="match status" value="1"/>
</dbReference>
<dbReference type="Pfam" id="PF08029">
    <property type="entry name" value="HisG_C"/>
    <property type="match status" value="1"/>
</dbReference>
<dbReference type="SUPFAM" id="SSF54913">
    <property type="entry name" value="GlnB-like"/>
    <property type="match status" value="1"/>
</dbReference>
<dbReference type="SUPFAM" id="SSF53850">
    <property type="entry name" value="Periplasmic binding protein-like II"/>
    <property type="match status" value="1"/>
</dbReference>
<dbReference type="PROSITE" id="PS01316">
    <property type="entry name" value="ATP_P_PHORIBOSYLTR"/>
    <property type="match status" value="1"/>
</dbReference>
<gene>
    <name evidence="1" type="primary">hisG</name>
    <name type="ordered locus">ECP_2062</name>
</gene>
<comment type="function">
    <text evidence="1">Catalyzes the condensation of ATP and 5-phosphoribose 1-diphosphate to form N'-(5'-phosphoribosyl)-ATP (PR-ATP). Has a crucial role in the pathway because the rate of histidine biosynthesis seems to be controlled primarily by regulation of HisG enzymatic activity.</text>
</comment>
<comment type="catalytic activity">
    <reaction evidence="1">
        <text>1-(5-phospho-beta-D-ribosyl)-ATP + diphosphate = 5-phospho-alpha-D-ribose 1-diphosphate + ATP</text>
        <dbReference type="Rhea" id="RHEA:18473"/>
        <dbReference type="ChEBI" id="CHEBI:30616"/>
        <dbReference type="ChEBI" id="CHEBI:33019"/>
        <dbReference type="ChEBI" id="CHEBI:58017"/>
        <dbReference type="ChEBI" id="CHEBI:73183"/>
        <dbReference type="EC" id="2.4.2.17"/>
    </reaction>
</comment>
<comment type="cofactor">
    <cofactor evidence="1">
        <name>Mg(2+)</name>
        <dbReference type="ChEBI" id="CHEBI:18420"/>
    </cofactor>
</comment>
<comment type="activity regulation">
    <text evidence="1">Feedback inhibited by histidine.</text>
</comment>
<comment type="pathway">
    <text evidence="1">Amino-acid biosynthesis; L-histidine biosynthesis; L-histidine from 5-phospho-alpha-D-ribose 1-diphosphate: step 1/9.</text>
</comment>
<comment type="subunit">
    <text evidence="1">Equilibrium between an active dimeric form, an inactive hexameric form and higher aggregates. Interconversion between the various forms is largely reversible and is influenced by the natural substrates and inhibitors of the enzyme.</text>
</comment>
<comment type="subcellular location">
    <subcellularLocation>
        <location evidence="1">Cytoplasm</location>
    </subcellularLocation>
</comment>
<comment type="similarity">
    <text evidence="1">Belongs to the ATP phosphoribosyltransferase family. Long subfamily.</text>
</comment>
<reference key="1">
    <citation type="journal article" date="2006" name="Mol. Microbiol.">
        <title>Role of pathogenicity island-associated integrases in the genome plasticity of uropathogenic Escherichia coli strain 536.</title>
        <authorList>
            <person name="Hochhut B."/>
            <person name="Wilde C."/>
            <person name="Balling G."/>
            <person name="Middendorf B."/>
            <person name="Dobrindt U."/>
            <person name="Brzuszkiewicz E."/>
            <person name="Gottschalk G."/>
            <person name="Carniel E."/>
            <person name="Hacker J."/>
        </authorList>
    </citation>
    <scope>NUCLEOTIDE SEQUENCE [LARGE SCALE GENOMIC DNA]</scope>
    <source>
        <strain>536 / UPEC</strain>
    </source>
</reference>
<sequence length="299" mass="33367">MTDNTRLRIAMQKSGRLSDDSRELLARCGIKINLHTQRLIAMAENMPIDILRVRDDDIPGLVMDGVVDLGIIGENVLEEELLNRRAQGEDPRYFTLRRLDFGGCRLSLATPVDEAWDGPLSLNGKRIATSYPHLLKRYLDQKGISFKSCLLNGSVEVAPRAGLADAICDLVSTGATLEANGLREVEVIYRSKACLIQRDGEMEESKQQLIDKLLTRIQGVIQARESKYIMMHAPTERLDEVIALLPGAERPTILPLAGDQQRVAMHMVSSETLFWETMEKLKALGASSILVLPIEKMME</sequence>
<name>HIS1_ECOL5</name>
<feature type="chain" id="PRO_1000004459" description="ATP phosphoribosyltransferase">
    <location>
        <begin position="1"/>
        <end position="299"/>
    </location>
</feature>
<accession>Q0TG68</accession>
<protein>
    <recommendedName>
        <fullName evidence="1">ATP phosphoribosyltransferase</fullName>
        <shortName evidence="1">ATP-PRT</shortName>
        <shortName evidence="1">ATP-PRTase</shortName>
        <ecNumber evidence="1">2.4.2.17</ecNumber>
    </recommendedName>
</protein>
<keyword id="KW-0028">Amino-acid biosynthesis</keyword>
<keyword id="KW-0067">ATP-binding</keyword>
<keyword id="KW-0963">Cytoplasm</keyword>
<keyword id="KW-0328">Glycosyltransferase</keyword>
<keyword id="KW-0368">Histidine biosynthesis</keyword>
<keyword id="KW-0460">Magnesium</keyword>
<keyword id="KW-0479">Metal-binding</keyword>
<keyword id="KW-0547">Nucleotide-binding</keyword>
<keyword id="KW-0808">Transferase</keyword>